<proteinExistence type="evidence at protein level"/>
<feature type="chain" id="PRO_0000059772" description="Ig kappa chain V-II region MOPC 511">
    <location>
        <begin position="1"/>
        <end position="113" status="greater than"/>
    </location>
</feature>
<feature type="region of interest" description="Framework-1">
    <location>
        <begin position="1"/>
        <end position="23"/>
    </location>
</feature>
<feature type="region of interest" description="Complementarity-determining-1">
    <location>
        <begin position="24"/>
        <end position="39"/>
    </location>
</feature>
<feature type="region of interest" description="Framework-2">
    <location>
        <begin position="40"/>
        <end position="54"/>
    </location>
</feature>
<feature type="region of interest" description="Complementarity-determining-2">
    <location>
        <begin position="55"/>
        <end position="61"/>
    </location>
</feature>
<feature type="region of interest" description="Framework-3">
    <location>
        <begin position="62"/>
        <end position="93"/>
    </location>
</feature>
<feature type="region of interest" description="Complementarity-determining-3">
    <location>
        <begin position="94"/>
        <end position="102"/>
    </location>
</feature>
<feature type="region of interest" description="Framework-4">
    <location>
        <begin position="103"/>
        <end position="112"/>
    </location>
</feature>
<feature type="disulfide bond" evidence="1">
    <location>
        <begin position="23"/>
        <end position="93"/>
    </location>
</feature>
<feature type="non-terminal residue">
    <location>
        <position position="113"/>
    </location>
</feature>
<name>KV2A3_MOUSE</name>
<evidence type="ECO:0000255" key="1">
    <source>
        <dbReference type="PROSITE-ProRule" id="PRU00114"/>
    </source>
</evidence>
<sequence>DIVITQDELSKPVTSGESVSISCRSSKSLLYKDGKTYLNWFLQGPQQSPRLLIYLMSTRASGVSDRFSGSGSGTDFTLEISRVKAEDVGVYYCQQLVEYPLTFGAGTKLELKR</sequence>
<protein>
    <recommendedName>
        <fullName>Ig kappa chain V-II region MOPC 511</fullName>
    </recommendedName>
</protein>
<comment type="miscellaneous">
    <text>This chain was isolated from a myeloma protein that binds phosphorylcholine.</text>
</comment>
<keyword id="KW-1064">Adaptive immunity</keyword>
<keyword id="KW-0903">Direct protein sequencing</keyword>
<keyword id="KW-1015">Disulfide bond</keyword>
<keyword id="KW-0391">Immunity</keyword>
<keyword id="KW-1280">Immunoglobulin</keyword>
<keyword id="KW-1185">Reference proteome</keyword>
<reference key="1">
    <citation type="journal article" date="1980" name="Mol. Immunol.">
        <title>Amino acid sequence of the light chain variable region of M511, a phosphorylcholine-binding murine myeloma protein.</title>
        <authorList>
            <person name="Appella E."/>
        </authorList>
    </citation>
    <scope>PROTEIN SEQUENCE</scope>
</reference>
<accession>P01628</accession>
<dbReference type="PIR" id="A01910">
    <property type="entry name" value="KVMS51"/>
</dbReference>
<dbReference type="PIR" id="G30538">
    <property type="entry name" value="G30538"/>
</dbReference>
<dbReference type="SMR" id="P01628"/>
<dbReference type="MGI" id="MGI:3644894">
    <property type="gene designation" value="EG381776"/>
</dbReference>
<dbReference type="Proteomes" id="UP000000589">
    <property type="component" value="Unplaced"/>
</dbReference>
<dbReference type="GO" id="GO:0019814">
    <property type="term" value="C:immunoglobulin complex"/>
    <property type="evidence" value="ECO:0007669"/>
    <property type="project" value="UniProtKB-KW"/>
</dbReference>
<dbReference type="GO" id="GO:0002250">
    <property type="term" value="P:adaptive immune response"/>
    <property type="evidence" value="ECO:0007669"/>
    <property type="project" value="UniProtKB-KW"/>
</dbReference>
<dbReference type="FunFam" id="2.60.40.10:FF:000365">
    <property type="entry name" value="If kappa light chain"/>
    <property type="match status" value="1"/>
</dbReference>
<dbReference type="Gene3D" id="2.60.40.10">
    <property type="entry name" value="Immunoglobulins"/>
    <property type="match status" value="1"/>
</dbReference>
<dbReference type="InterPro" id="IPR007110">
    <property type="entry name" value="Ig-like_dom"/>
</dbReference>
<dbReference type="InterPro" id="IPR036179">
    <property type="entry name" value="Ig-like_dom_sf"/>
</dbReference>
<dbReference type="InterPro" id="IPR013783">
    <property type="entry name" value="Ig-like_fold"/>
</dbReference>
<dbReference type="InterPro" id="IPR003599">
    <property type="entry name" value="Ig_sub"/>
</dbReference>
<dbReference type="InterPro" id="IPR013106">
    <property type="entry name" value="Ig_V-set"/>
</dbReference>
<dbReference type="InterPro" id="IPR050150">
    <property type="entry name" value="IgV_Light_Chain"/>
</dbReference>
<dbReference type="PANTHER" id="PTHR23267">
    <property type="entry name" value="IMMUNOGLOBULIN LIGHT CHAIN"/>
    <property type="match status" value="1"/>
</dbReference>
<dbReference type="Pfam" id="PF07686">
    <property type="entry name" value="V-set"/>
    <property type="match status" value="1"/>
</dbReference>
<dbReference type="SMART" id="SM00409">
    <property type="entry name" value="IG"/>
    <property type="match status" value="1"/>
</dbReference>
<dbReference type="SMART" id="SM00406">
    <property type="entry name" value="IGv"/>
    <property type="match status" value="1"/>
</dbReference>
<dbReference type="SUPFAM" id="SSF48726">
    <property type="entry name" value="Immunoglobulin"/>
    <property type="match status" value="1"/>
</dbReference>
<dbReference type="PROSITE" id="PS50835">
    <property type="entry name" value="IG_LIKE"/>
    <property type="match status" value="1"/>
</dbReference>
<organism>
    <name type="scientific">Mus musculus</name>
    <name type="common">Mouse</name>
    <dbReference type="NCBI Taxonomy" id="10090"/>
    <lineage>
        <taxon>Eukaryota</taxon>
        <taxon>Metazoa</taxon>
        <taxon>Chordata</taxon>
        <taxon>Craniata</taxon>
        <taxon>Vertebrata</taxon>
        <taxon>Euteleostomi</taxon>
        <taxon>Mammalia</taxon>
        <taxon>Eutheria</taxon>
        <taxon>Euarchontoglires</taxon>
        <taxon>Glires</taxon>
        <taxon>Rodentia</taxon>
        <taxon>Myomorpha</taxon>
        <taxon>Muroidea</taxon>
        <taxon>Muridae</taxon>
        <taxon>Murinae</taxon>
        <taxon>Mus</taxon>
        <taxon>Mus</taxon>
    </lineage>
</organism>